<keyword id="KW-0963">Cytoplasm</keyword>
<keyword id="KW-0489">Methyltransferase</keyword>
<keyword id="KW-0698">rRNA processing</keyword>
<keyword id="KW-0949">S-adenosyl-L-methionine</keyword>
<keyword id="KW-0808">Transferase</keyword>
<name>RSMG_PSYCK</name>
<comment type="function">
    <text evidence="1">Specifically methylates the N7 position of guanine in position 527 of 16S rRNA.</text>
</comment>
<comment type="catalytic activity">
    <reaction evidence="1">
        <text>guanosine(527) in 16S rRNA + S-adenosyl-L-methionine = N(7)-methylguanosine(527) in 16S rRNA + S-adenosyl-L-homocysteine</text>
        <dbReference type="Rhea" id="RHEA:42732"/>
        <dbReference type="Rhea" id="RHEA-COMP:10209"/>
        <dbReference type="Rhea" id="RHEA-COMP:10210"/>
        <dbReference type="ChEBI" id="CHEBI:57856"/>
        <dbReference type="ChEBI" id="CHEBI:59789"/>
        <dbReference type="ChEBI" id="CHEBI:74269"/>
        <dbReference type="ChEBI" id="CHEBI:74480"/>
        <dbReference type="EC" id="2.1.1.170"/>
    </reaction>
</comment>
<comment type="subcellular location">
    <subcellularLocation>
        <location evidence="1">Cytoplasm</location>
    </subcellularLocation>
</comment>
<comment type="similarity">
    <text evidence="1">Belongs to the methyltransferase superfamily. RNA methyltransferase RsmG family.</text>
</comment>
<dbReference type="EC" id="2.1.1.170" evidence="1"/>
<dbReference type="EMBL" id="CP000323">
    <property type="protein sequence ID" value="ABE74838.1"/>
    <property type="molecule type" value="Genomic_DNA"/>
</dbReference>
<dbReference type="RefSeq" id="WP_011513394.1">
    <property type="nucleotide sequence ID" value="NC_007969.1"/>
</dbReference>
<dbReference type="SMR" id="Q1QBW5"/>
<dbReference type="STRING" id="335284.Pcryo_1057"/>
<dbReference type="KEGG" id="pcr:Pcryo_1057"/>
<dbReference type="eggNOG" id="COG0357">
    <property type="taxonomic scope" value="Bacteria"/>
</dbReference>
<dbReference type="HOGENOM" id="CLU_065341_2_0_6"/>
<dbReference type="Proteomes" id="UP000002425">
    <property type="component" value="Chromosome"/>
</dbReference>
<dbReference type="GO" id="GO:0005829">
    <property type="term" value="C:cytosol"/>
    <property type="evidence" value="ECO:0007669"/>
    <property type="project" value="TreeGrafter"/>
</dbReference>
<dbReference type="GO" id="GO:0070043">
    <property type="term" value="F:rRNA (guanine-N7-)-methyltransferase activity"/>
    <property type="evidence" value="ECO:0007669"/>
    <property type="project" value="UniProtKB-UniRule"/>
</dbReference>
<dbReference type="CDD" id="cd02440">
    <property type="entry name" value="AdoMet_MTases"/>
    <property type="match status" value="1"/>
</dbReference>
<dbReference type="Gene3D" id="3.40.50.150">
    <property type="entry name" value="Vaccinia Virus protein VP39"/>
    <property type="match status" value="1"/>
</dbReference>
<dbReference type="HAMAP" id="MF_00074">
    <property type="entry name" value="16SrRNA_methyltr_G"/>
    <property type="match status" value="1"/>
</dbReference>
<dbReference type="InterPro" id="IPR003682">
    <property type="entry name" value="rRNA_ssu_MeTfrase_G"/>
</dbReference>
<dbReference type="InterPro" id="IPR029063">
    <property type="entry name" value="SAM-dependent_MTases_sf"/>
</dbReference>
<dbReference type="NCBIfam" id="TIGR00138">
    <property type="entry name" value="rsmG_gidB"/>
    <property type="match status" value="1"/>
</dbReference>
<dbReference type="PANTHER" id="PTHR31760">
    <property type="entry name" value="S-ADENOSYL-L-METHIONINE-DEPENDENT METHYLTRANSFERASES SUPERFAMILY PROTEIN"/>
    <property type="match status" value="1"/>
</dbReference>
<dbReference type="PANTHER" id="PTHR31760:SF0">
    <property type="entry name" value="S-ADENOSYL-L-METHIONINE-DEPENDENT METHYLTRANSFERASES SUPERFAMILY PROTEIN"/>
    <property type="match status" value="1"/>
</dbReference>
<dbReference type="Pfam" id="PF02527">
    <property type="entry name" value="GidB"/>
    <property type="match status" value="1"/>
</dbReference>
<dbReference type="PIRSF" id="PIRSF003078">
    <property type="entry name" value="GidB"/>
    <property type="match status" value="1"/>
</dbReference>
<dbReference type="SUPFAM" id="SSF53335">
    <property type="entry name" value="S-adenosyl-L-methionine-dependent methyltransferases"/>
    <property type="match status" value="1"/>
</dbReference>
<sequence length="238" mass="25876">MSDSTKASLSSANMGNIHIDPTGFVKLGAQLPTLANILAQAIDELGLTLSAQQQRSLLLYLDQLLLWNKAYNLTAITDPVEALIKHVIDCLAIITHLPSGSLLDIGTGAGLPAVIIAICQPERSCTALDSNQKKIRFIKQVSSELGLSNMQPIASRIEAHEASYDVITSRAFASLIDFVAVAEPRLADNGYLCAMKGKAPSEEELDALSNDWQFKTIKLNVPRLHDSRHLIELSYKNV</sequence>
<proteinExistence type="inferred from homology"/>
<reference key="1">
    <citation type="submission" date="2006-03" db="EMBL/GenBank/DDBJ databases">
        <title>Complete sequence of chromosome of Psychrobacter cryohalolentis K5.</title>
        <authorList>
            <consortium name="US DOE Joint Genome Institute"/>
            <person name="Copeland A."/>
            <person name="Lucas S."/>
            <person name="Lapidus A."/>
            <person name="Barry K."/>
            <person name="Detter J.C."/>
            <person name="Glavina T."/>
            <person name="Hammon N."/>
            <person name="Israni S."/>
            <person name="Dalin E."/>
            <person name="Tice H."/>
            <person name="Pitluck S."/>
            <person name="Brettin T."/>
            <person name="Bruce D."/>
            <person name="Han C."/>
            <person name="Tapia R."/>
            <person name="Sims D.R."/>
            <person name="Gilna P."/>
            <person name="Schmutz J."/>
            <person name="Larimer F."/>
            <person name="Land M."/>
            <person name="Hauser L."/>
            <person name="Kyrpides N."/>
            <person name="Kim E."/>
            <person name="Richardson P."/>
        </authorList>
    </citation>
    <scope>NUCLEOTIDE SEQUENCE [LARGE SCALE GENOMIC DNA]</scope>
    <source>
        <strain>ATCC BAA-1226 / DSM 17306 / VKM B-2378 / K5</strain>
    </source>
</reference>
<gene>
    <name evidence="1" type="primary">rsmG</name>
    <name type="ordered locus">Pcryo_1057</name>
</gene>
<protein>
    <recommendedName>
        <fullName evidence="1">Ribosomal RNA small subunit methyltransferase G</fullName>
        <ecNumber evidence="1">2.1.1.170</ecNumber>
    </recommendedName>
    <alternativeName>
        <fullName evidence="1">16S rRNA 7-methylguanosine methyltransferase</fullName>
        <shortName evidence="1">16S rRNA m7G methyltransferase</shortName>
    </alternativeName>
</protein>
<organism>
    <name type="scientific">Psychrobacter cryohalolentis (strain ATCC BAA-1226 / DSM 17306 / VKM B-2378 / K5)</name>
    <dbReference type="NCBI Taxonomy" id="335284"/>
    <lineage>
        <taxon>Bacteria</taxon>
        <taxon>Pseudomonadati</taxon>
        <taxon>Pseudomonadota</taxon>
        <taxon>Gammaproteobacteria</taxon>
        <taxon>Moraxellales</taxon>
        <taxon>Moraxellaceae</taxon>
        <taxon>Psychrobacter</taxon>
    </lineage>
</organism>
<accession>Q1QBW5</accession>
<evidence type="ECO:0000255" key="1">
    <source>
        <dbReference type="HAMAP-Rule" id="MF_00074"/>
    </source>
</evidence>
<feature type="chain" id="PRO_0000335404" description="Ribosomal RNA small subunit methyltransferase G">
    <location>
        <begin position="1"/>
        <end position="238"/>
    </location>
</feature>
<feature type="binding site" evidence="1">
    <location>
        <position position="106"/>
    </location>
    <ligand>
        <name>S-adenosyl-L-methionine</name>
        <dbReference type="ChEBI" id="CHEBI:59789"/>
    </ligand>
</feature>
<feature type="binding site" evidence="1">
    <location>
        <position position="111"/>
    </location>
    <ligand>
        <name>S-adenosyl-L-methionine</name>
        <dbReference type="ChEBI" id="CHEBI:59789"/>
    </ligand>
</feature>
<feature type="binding site" evidence="1">
    <location>
        <begin position="157"/>
        <end position="158"/>
    </location>
    <ligand>
        <name>S-adenosyl-L-methionine</name>
        <dbReference type="ChEBI" id="CHEBI:59789"/>
    </ligand>
</feature>
<feature type="binding site" evidence="1">
    <location>
        <position position="170"/>
    </location>
    <ligand>
        <name>S-adenosyl-L-methionine</name>
        <dbReference type="ChEBI" id="CHEBI:59789"/>
    </ligand>
</feature>